<keyword id="KW-0042">Antenna complex</keyword>
<keyword id="KW-0089">Bile pigment</keyword>
<keyword id="KW-0150">Chloroplast</keyword>
<keyword id="KW-0157">Chromophore</keyword>
<keyword id="KW-0249">Electron transport</keyword>
<keyword id="KW-0472">Membrane</keyword>
<keyword id="KW-0488">Methylation</keyword>
<keyword id="KW-0602">Photosynthesis</keyword>
<keyword id="KW-0605">Phycobilisome</keyword>
<keyword id="KW-0934">Plastid</keyword>
<keyword id="KW-0793">Thylakoid</keyword>
<keyword id="KW-0813">Transport</keyword>
<name>APCB_CYACA</name>
<accession>Q9TLS8</accession>
<comment type="function">
    <text>Light-harvesting photosynthetic bile pigment-protein from the phycobiliprotein complex. Allophycocyanin has a maximum absorption at approximately 650 nanometers.</text>
</comment>
<comment type="subunit">
    <text evidence="1">Heterodimer of an alpha and a beta chain.</text>
</comment>
<comment type="subcellular location">
    <subcellularLocation>
        <location evidence="1">Plastid</location>
        <location evidence="1">Chloroplast thylakoid membrane</location>
        <topology evidence="1">Peripheral membrane protein</topology>
        <orientation evidence="1">Stromal side</orientation>
    </subcellularLocation>
    <text evidence="1">Forms the core of the phycobilisome.</text>
</comment>
<comment type="PTM">
    <text evidence="1">Contains one covalently linked phycocyanobilin chromophore.</text>
</comment>
<comment type="similarity">
    <text evidence="2">Belongs to the phycobiliprotein family.</text>
</comment>
<dbReference type="EMBL" id="AF022186">
    <property type="protein sequence ID" value="AAF12903.1"/>
    <property type="molecule type" value="Genomic_DNA"/>
</dbReference>
<dbReference type="RefSeq" id="NP_045191.1">
    <property type="nucleotide sequence ID" value="NC_001840.1"/>
</dbReference>
<dbReference type="SMR" id="Q9TLS8"/>
<dbReference type="GeneID" id="800112"/>
<dbReference type="GO" id="GO:0009535">
    <property type="term" value="C:chloroplast thylakoid membrane"/>
    <property type="evidence" value="ECO:0007669"/>
    <property type="project" value="UniProtKB-SubCell"/>
</dbReference>
<dbReference type="GO" id="GO:0030089">
    <property type="term" value="C:phycobilisome"/>
    <property type="evidence" value="ECO:0007669"/>
    <property type="project" value="UniProtKB-KW"/>
</dbReference>
<dbReference type="GO" id="GO:0015979">
    <property type="term" value="P:photosynthesis"/>
    <property type="evidence" value="ECO:0007669"/>
    <property type="project" value="UniProtKB-KW"/>
</dbReference>
<dbReference type="CDD" id="cd12126">
    <property type="entry name" value="APC_beta"/>
    <property type="match status" value="1"/>
</dbReference>
<dbReference type="Gene3D" id="1.10.490.20">
    <property type="entry name" value="Phycocyanins"/>
    <property type="match status" value="1"/>
</dbReference>
<dbReference type="InterPro" id="IPR006245">
    <property type="entry name" value="Allophycocyanin_b"/>
</dbReference>
<dbReference type="InterPro" id="IPR009050">
    <property type="entry name" value="Globin-like_sf"/>
</dbReference>
<dbReference type="InterPro" id="IPR012128">
    <property type="entry name" value="Phycobilisome_asu/bsu"/>
</dbReference>
<dbReference type="InterPro" id="IPR038719">
    <property type="entry name" value="Phycobilisome_asu/bsu_sf"/>
</dbReference>
<dbReference type="NCBIfam" id="TIGR01337">
    <property type="entry name" value="apcB"/>
    <property type="match status" value="1"/>
</dbReference>
<dbReference type="PANTHER" id="PTHR34011:SF3">
    <property type="entry name" value="ALLOPHYCOCYANIN BETA CHAIN"/>
    <property type="match status" value="1"/>
</dbReference>
<dbReference type="PANTHER" id="PTHR34011">
    <property type="entry name" value="PHYCOBILISOME 32.1 KDA LINKER POLYPEPTIDE, PHYCOCYANIN-ASSOCIATED, ROD 2-RELATED"/>
    <property type="match status" value="1"/>
</dbReference>
<dbReference type="Pfam" id="PF00502">
    <property type="entry name" value="Phycobilisome"/>
    <property type="match status" value="1"/>
</dbReference>
<dbReference type="PIRSF" id="PIRSF000081">
    <property type="entry name" value="Phycocyanin"/>
    <property type="match status" value="1"/>
</dbReference>
<dbReference type="SUPFAM" id="SSF46458">
    <property type="entry name" value="Globin-like"/>
    <property type="match status" value="1"/>
</dbReference>
<reference key="1">
    <citation type="journal article" date="2000" name="J. Mol. Evol.">
        <title>The structure and gene repertoire of an ancient red algal plastid genome.</title>
        <authorList>
            <person name="Gloeckner G."/>
            <person name="Rosenthal A."/>
            <person name="Valentin K.-U."/>
        </authorList>
    </citation>
    <scope>NUCLEOTIDE SEQUENCE [LARGE SCALE GENOMIC DNA]</scope>
    <source>
        <strain>RK-1</strain>
    </source>
</reference>
<organism>
    <name type="scientific">Cyanidium caldarium</name>
    <name type="common">Red alga</name>
    <dbReference type="NCBI Taxonomy" id="2771"/>
    <lineage>
        <taxon>Eukaryota</taxon>
        <taxon>Rhodophyta</taxon>
        <taxon>Bangiophyceae</taxon>
        <taxon>Cyanidiales</taxon>
        <taxon>Cyanidiaceae</taxon>
        <taxon>Cyanidium</taxon>
    </lineage>
</organism>
<protein>
    <recommendedName>
        <fullName>Allophycocyanin beta chain</fullName>
    </recommendedName>
</protein>
<geneLocation type="chloroplast"/>
<feature type="chain" id="PRO_0000199097" description="Allophycocyanin beta chain">
    <location>
        <begin position="1"/>
        <end position="161"/>
    </location>
</feature>
<feature type="binding site" description="covalent" evidence="1">
    <location>
        <position position="81"/>
    </location>
    <ligand>
        <name>(2R,3E)-phycocyanobilin</name>
        <dbReference type="ChEBI" id="CHEBI:85275"/>
    </ligand>
</feature>
<feature type="modified residue" description="N4-methylasparagine" evidence="1">
    <location>
        <position position="71"/>
    </location>
</feature>
<sequence length="161" mass="17471">MQDAITAVINAADVQGKYLDNNSIEKLRSYFQTGELRVRAAASISANAAGIIKEAVAKSLLYSDITRPGGNMYTTRRYAACIRDLDYYLRYATYSMLAGDPSILDERVLNGLKETYNSLGVPIGATIQSIQAMKEVTASLVGPDAGQEMGVYFDYICSGLS</sequence>
<proteinExistence type="inferred from homology"/>
<evidence type="ECO:0000250" key="1"/>
<evidence type="ECO:0000305" key="2"/>
<gene>
    <name type="primary">apcB</name>
</gene>